<evidence type="ECO:0000255" key="1">
    <source>
        <dbReference type="HAMAP-Rule" id="MF_01579"/>
    </source>
</evidence>
<accession>C0Q2Y5</accession>
<comment type="function">
    <text evidence="1">Specifically methylates the cytosine at position 1407 (m5C1407) of 16S rRNA.</text>
</comment>
<comment type="catalytic activity">
    <reaction evidence="1">
        <text>cytidine(1407) in 16S rRNA + S-adenosyl-L-methionine = 5-methylcytidine(1407) in 16S rRNA + S-adenosyl-L-homocysteine + H(+)</text>
        <dbReference type="Rhea" id="RHEA:42756"/>
        <dbReference type="Rhea" id="RHEA-COMP:10223"/>
        <dbReference type="Rhea" id="RHEA-COMP:10224"/>
        <dbReference type="ChEBI" id="CHEBI:15378"/>
        <dbReference type="ChEBI" id="CHEBI:57856"/>
        <dbReference type="ChEBI" id="CHEBI:59789"/>
        <dbReference type="ChEBI" id="CHEBI:74483"/>
        <dbReference type="ChEBI" id="CHEBI:82748"/>
        <dbReference type="EC" id="2.1.1.178"/>
    </reaction>
</comment>
<comment type="subcellular location">
    <subcellularLocation>
        <location evidence="1">Cytoplasm</location>
    </subcellularLocation>
</comment>
<comment type="similarity">
    <text evidence="1">Belongs to the class I-like SAM-binding methyltransferase superfamily. RsmB/NOP family.</text>
</comment>
<proteinExistence type="inferred from homology"/>
<organism>
    <name type="scientific">Salmonella paratyphi C (strain RKS4594)</name>
    <dbReference type="NCBI Taxonomy" id="476213"/>
    <lineage>
        <taxon>Bacteria</taxon>
        <taxon>Pseudomonadati</taxon>
        <taxon>Pseudomonadota</taxon>
        <taxon>Gammaproteobacteria</taxon>
        <taxon>Enterobacterales</taxon>
        <taxon>Enterobacteriaceae</taxon>
        <taxon>Salmonella</taxon>
    </lineage>
</organism>
<reference key="1">
    <citation type="journal article" date="2009" name="PLoS ONE">
        <title>Salmonella paratyphi C: genetic divergence from Salmonella choleraesuis and pathogenic convergence with Salmonella typhi.</title>
        <authorList>
            <person name="Liu W.-Q."/>
            <person name="Feng Y."/>
            <person name="Wang Y."/>
            <person name="Zou Q.-H."/>
            <person name="Chen F."/>
            <person name="Guo J.-T."/>
            <person name="Peng Y.-H."/>
            <person name="Jin Y."/>
            <person name="Li Y.-G."/>
            <person name="Hu S.-N."/>
            <person name="Johnston R.N."/>
            <person name="Liu G.-R."/>
            <person name="Liu S.-L."/>
        </authorList>
    </citation>
    <scope>NUCLEOTIDE SEQUENCE [LARGE SCALE GENOMIC DNA]</scope>
    <source>
        <strain>RKS4594</strain>
    </source>
</reference>
<dbReference type="EC" id="2.1.1.178" evidence="1"/>
<dbReference type="EMBL" id="CP000857">
    <property type="protein sequence ID" value="ACN46017.1"/>
    <property type="molecule type" value="Genomic_DNA"/>
</dbReference>
<dbReference type="RefSeq" id="WP_001540209.1">
    <property type="nucleotide sequence ID" value="NC_012125.1"/>
</dbReference>
<dbReference type="SMR" id="C0Q2Y5"/>
<dbReference type="KEGG" id="sei:SPC_1879"/>
<dbReference type="HOGENOM" id="CLU_005316_6_2_6"/>
<dbReference type="Proteomes" id="UP000001599">
    <property type="component" value="Chromosome"/>
</dbReference>
<dbReference type="GO" id="GO:0005737">
    <property type="term" value="C:cytoplasm"/>
    <property type="evidence" value="ECO:0007669"/>
    <property type="project" value="UniProtKB-SubCell"/>
</dbReference>
<dbReference type="GO" id="GO:0003723">
    <property type="term" value="F:RNA binding"/>
    <property type="evidence" value="ECO:0007669"/>
    <property type="project" value="UniProtKB-KW"/>
</dbReference>
<dbReference type="GO" id="GO:0009383">
    <property type="term" value="F:rRNA (cytosine-C5-)-methyltransferase activity"/>
    <property type="evidence" value="ECO:0007669"/>
    <property type="project" value="TreeGrafter"/>
</dbReference>
<dbReference type="GO" id="GO:0070475">
    <property type="term" value="P:rRNA base methylation"/>
    <property type="evidence" value="ECO:0007669"/>
    <property type="project" value="TreeGrafter"/>
</dbReference>
<dbReference type="CDD" id="cd02440">
    <property type="entry name" value="AdoMet_MTases"/>
    <property type="match status" value="1"/>
</dbReference>
<dbReference type="FunFam" id="3.10.450.720:FF:000001">
    <property type="entry name" value="Ribosomal RNA small subunit methyltransferase F"/>
    <property type="match status" value="1"/>
</dbReference>
<dbReference type="FunFam" id="3.40.50.150:FF:000079">
    <property type="entry name" value="Ribosomal RNA small subunit methyltransferase F"/>
    <property type="match status" value="1"/>
</dbReference>
<dbReference type="Gene3D" id="3.10.450.720">
    <property type="match status" value="1"/>
</dbReference>
<dbReference type="Gene3D" id="3.40.50.150">
    <property type="entry name" value="Vaccinia Virus protein VP39"/>
    <property type="match status" value="1"/>
</dbReference>
<dbReference type="HAMAP" id="MF_01579">
    <property type="entry name" value="16SrRNA_methyltr_F"/>
    <property type="match status" value="1"/>
</dbReference>
<dbReference type="InterPro" id="IPR031341">
    <property type="entry name" value="Methyltr_RsmF_N"/>
</dbReference>
<dbReference type="InterPro" id="IPR049560">
    <property type="entry name" value="MeTrfase_RsmB-F_NOP2_cat"/>
</dbReference>
<dbReference type="InterPro" id="IPR001678">
    <property type="entry name" value="MeTrfase_RsmB-F_NOP2_dom"/>
</dbReference>
<dbReference type="InterPro" id="IPR027391">
    <property type="entry name" value="Nol1_Nop2_Fmu_2"/>
</dbReference>
<dbReference type="InterPro" id="IPR011023">
    <property type="entry name" value="Nop2p"/>
</dbReference>
<dbReference type="InterPro" id="IPR023267">
    <property type="entry name" value="RCMT"/>
</dbReference>
<dbReference type="InterPro" id="IPR023545">
    <property type="entry name" value="rRNA_ssu_MeTfrase_F"/>
</dbReference>
<dbReference type="InterPro" id="IPR018314">
    <property type="entry name" value="RsmB/NOL1/NOP2-like_CS"/>
</dbReference>
<dbReference type="InterPro" id="IPR029063">
    <property type="entry name" value="SAM-dependent_MTases_sf"/>
</dbReference>
<dbReference type="InterPro" id="IPR048457">
    <property type="entry name" value="YebU_pre-PUA_dom"/>
</dbReference>
<dbReference type="NCBIfam" id="TIGR00446">
    <property type="entry name" value="nop2p"/>
    <property type="match status" value="1"/>
</dbReference>
<dbReference type="NCBIfam" id="NF008898">
    <property type="entry name" value="PRK11933.1"/>
    <property type="match status" value="1"/>
</dbReference>
<dbReference type="PANTHER" id="PTHR22807:SF30">
    <property type="entry name" value="28S RRNA (CYTOSINE(4447)-C(5))-METHYLTRANSFERASE-RELATED"/>
    <property type="match status" value="1"/>
</dbReference>
<dbReference type="PANTHER" id="PTHR22807">
    <property type="entry name" value="NOP2 YEAST -RELATED NOL1/NOP2/FMU SUN DOMAIN-CONTAINING"/>
    <property type="match status" value="1"/>
</dbReference>
<dbReference type="Pfam" id="PF01189">
    <property type="entry name" value="Methyltr_RsmB-F"/>
    <property type="match status" value="1"/>
</dbReference>
<dbReference type="Pfam" id="PF17125">
    <property type="entry name" value="Methyltr_RsmF_N"/>
    <property type="match status" value="1"/>
</dbReference>
<dbReference type="Pfam" id="PF13636">
    <property type="entry name" value="Methyltranf_PUA"/>
    <property type="match status" value="1"/>
</dbReference>
<dbReference type="Pfam" id="PF21150">
    <property type="entry name" value="YebU_pre-PUA_dom"/>
    <property type="match status" value="1"/>
</dbReference>
<dbReference type="PRINTS" id="PR02008">
    <property type="entry name" value="RCMTFAMILY"/>
</dbReference>
<dbReference type="SUPFAM" id="SSF53335">
    <property type="entry name" value="S-adenosyl-L-methionine-dependent methyltransferases"/>
    <property type="match status" value="1"/>
</dbReference>
<dbReference type="PROSITE" id="PS01153">
    <property type="entry name" value="NOL1_NOP2_SUN"/>
    <property type="match status" value="1"/>
</dbReference>
<dbReference type="PROSITE" id="PS51686">
    <property type="entry name" value="SAM_MT_RSMB_NOP"/>
    <property type="match status" value="1"/>
</dbReference>
<keyword id="KW-0963">Cytoplasm</keyword>
<keyword id="KW-0489">Methyltransferase</keyword>
<keyword id="KW-0694">RNA-binding</keyword>
<keyword id="KW-0698">rRNA processing</keyword>
<keyword id="KW-0949">S-adenosyl-L-methionine</keyword>
<keyword id="KW-0808">Transferase</keyword>
<name>RSMF_SALPC</name>
<sequence length="479" mass="53321">MAQHAVYFPDAFLTQMREAMPSTLSFDEFISACQRPLRRSIRINTLKISVADFLALIAPYGWSLTPIPWCHEGFWIERDDEEALPLGSTAEHLSGLFYIQEASSMLPVAALFADDNHPQRVMDMAAAPGSKTTQIAARMGNRGTILANEFSASRVKVLHANISRCGIANTALTHFDGRVFGAALPEMFDAILLDAPCSGEGVVRKDPDALKNWSPESNLDIAATQRELLDSAFHALRPGGTLVYSTCTLNRQENEAVCLWLKETYADAVEFLPLGDLFPDADRALTPEGFLHVFPQIYDCEGFFVARLRKMSSLPAMPAPGYKVGAFPFTPLKGREALHVTQAANAVGLLWDENLHLWQREKEVWLFPAEIESLIGKVRFSRLGIKLAESHNKGYRWQHEATIALACPTHAHAFELSVQEAEEWYRGRDIYPQTPPAADDVLVTFQHQPLGLAKRIGARIKNSYPRELVRDGKLFTGNS</sequence>
<protein>
    <recommendedName>
        <fullName evidence="1">Ribosomal RNA small subunit methyltransferase F</fullName>
        <ecNumber evidence="1">2.1.1.178</ecNumber>
    </recommendedName>
    <alternativeName>
        <fullName evidence="1">16S rRNA m5C1407 methyltransferase</fullName>
    </alternativeName>
    <alternativeName>
        <fullName evidence="1">rRNA (cytosine-C(5)-)-methyltransferase RsmF</fullName>
    </alternativeName>
</protein>
<feature type="chain" id="PRO_1000185644" description="Ribosomal RNA small subunit methyltransferase F">
    <location>
        <begin position="1"/>
        <end position="479"/>
    </location>
</feature>
<feature type="active site" description="Nucleophile" evidence="1">
    <location>
        <position position="247"/>
    </location>
</feature>
<feature type="binding site" evidence="1">
    <location>
        <begin position="125"/>
        <end position="131"/>
    </location>
    <ligand>
        <name>S-adenosyl-L-methionine</name>
        <dbReference type="ChEBI" id="CHEBI:59789"/>
    </ligand>
</feature>
<feature type="binding site" evidence="1">
    <location>
        <position position="149"/>
    </location>
    <ligand>
        <name>S-adenosyl-L-methionine</name>
        <dbReference type="ChEBI" id="CHEBI:59789"/>
    </ligand>
</feature>
<feature type="binding site" evidence="1">
    <location>
        <position position="176"/>
    </location>
    <ligand>
        <name>S-adenosyl-L-methionine</name>
        <dbReference type="ChEBI" id="CHEBI:59789"/>
    </ligand>
</feature>
<feature type="binding site" evidence="1">
    <location>
        <position position="194"/>
    </location>
    <ligand>
        <name>S-adenosyl-L-methionine</name>
        <dbReference type="ChEBI" id="CHEBI:59789"/>
    </ligand>
</feature>
<gene>
    <name evidence="1" type="primary">rsmF</name>
    <name type="ordered locus">SPC_1879</name>
</gene>